<comment type="subcellular location">
    <subcellularLocation>
        <location evidence="3">Membrane</location>
        <topology evidence="3">Multi-pass membrane protein</topology>
    </subcellularLocation>
</comment>
<comment type="similarity">
    <text evidence="4">Belongs to the ABC transporter superfamily. ABCB family. Multidrug resistance exporter (TC 3.A.1.201) subfamily.</text>
</comment>
<keyword id="KW-0067">ATP-binding</keyword>
<keyword id="KW-0325">Glycoprotein</keyword>
<keyword id="KW-0472">Membrane</keyword>
<keyword id="KW-0547">Nucleotide-binding</keyword>
<keyword id="KW-1185">Reference proteome</keyword>
<keyword id="KW-0677">Repeat</keyword>
<keyword id="KW-0812">Transmembrane</keyword>
<keyword id="KW-1133">Transmembrane helix</keyword>
<keyword id="KW-0813">Transport</keyword>
<organism>
    <name type="scientific">Arabidopsis thaliana</name>
    <name type="common">Mouse-ear cress</name>
    <dbReference type="NCBI Taxonomy" id="3702"/>
    <lineage>
        <taxon>Eukaryota</taxon>
        <taxon>Viridiplantae</taxon>
        <taxon>Streptophyta</taxon>
        <taxon>Embryophyta</taxon>
        <taxon>Tracheophyta</taxon>
        <taxon>Spermatophyta</taxon>
        <taxon>Magnoliopsida</taxon>
        <taxon>eudicotyledons</taxon>
        <taxon>Gunneridae</taxon>
        <taxon>Pentapetalae</taxon>
        <taxon>rosids</taxon>
        <taxon>malvids</taxon>
        <taxon>Brassicales</taxon>
        <taxon>Brassicaceae</taxon>
        <taxon>Camelineae</taxon>
        <taxon>Arabidopsis</taxon>
    </lineage>
</organism>
<dbReference type="EMBL" id="AC069471">
    <property type="protein sequence ID" value="AAG51476.1"/>
    <property type="molecule type" value="Genomic_DNA"/>
</dbReference>
<dbReference type="EMBL" id="CP002684">
    <property type="protein sequence ID" value="AEE30902.1"/>
    <property type="molecule type" value="Genomic_DNA"/>
</dbReference>
<dbReference type="PIR" id="F86405">
    <property type="entry name" value="F86405"/>
</dbReference>
<dbReference type="RefSeq" id="NP_174122.1">
    <property type="nucleotide sequence ID" value="NM_102566.3"/>
</dbReference>
<dbReference type="SMR" id="Q9C7F2"/>
<dbReference type="FunCoup" id="Q9C7F2">
    <property type="interactions" value="176"/>
</dbReference>
<dbReference type="STRING" id="3702.Q9C7F2"/>
<dbReference type="TCDB" id="3.A.1.201.33">
    <property type="family name" value="the atp-binding cassette (abc) superfamily"/>
</dbReference>
<dbReference type="GlyCosmos" id="Q9C7F2">
    <property type="glycosylation" value="6 sites, No reported glycans"/>
</dbReference>
<dbReference type="GlyGen" id="Q9C7F2">
    <property type="glycosylation" value="6 sites"/>
</dbReference>
<dbReference type="iPTMnet" id="Q9C7F2"/>
<dbReference type="PaxDb" id="3702-AT1G28010.1"/>
<dbReference type="ProteomicsDB" id="244528"/>
<dbReference type="EnsemblPlants" id="AT1G28010.1">
    <property type="protein sequence ID" value="AT1G28010.1"/>
    <property type="gene ID" value="AT1G28010"/>
</dbReference>
<dbReference type="GeneID" id="839694"/>
<dbReference type="Gramene" id="AT1G28010.1">
    <property type="protein sequence ID" value="AT1G28010.1"/>
    <property type="gene ID" value="AT1G28010"/>
</dbReference>
<dbReference type="KEGG" id="ath:AT1G28010"/>
<dbReference type="Araport" id="AT1G28010"/>
<dbReference type="TAIR" id="AT1G28010">
    <property type="gene designation" value="ABCB14"/>
</dbReference>
<dbReference type="eggNOG" id="KOG0055">
    <property type="taxonomic scope" value="Eukaryota"/>
</dbReference>
<dbReference type="HOGENOM" id="CLU_000604_17_2_1"/>
<dbReference type="InParanoid" id="Q9C7F2"/>
<dbReference type="OMA" id="CIHGGTL"/>
<dbReference type="PhylomeDB" id="Q9C7F2"/>
<dbReference type="BioCyc" id="ARA:AT1G28010-MONOMER"/>
<dbReference type="PRO" id="PR:Q9C7F2"/>
<dbReference type="Proteomes" id="UP000006548">
    <property type="component" value="Chromosome 1"/>
</dbReference>
<dbReference type="ExpressionAtlas" id="Q9C7F2">
    <property type="expression patterns" value="baseline and differential"/>
</dbReference>
<dbReference type="GO" id="GO:0016020">
    <property type="term" value="C:membrane"/>
    <property type="evidence" value="ECO:0007669"/>
    <property type="project" value="UniProtKB-SubCell"/>
</dbReference>
<dbReference type="GO" id="GO:0140359">
    <property type="term" value="F:ABC-type transporter activity"/>
    <property type="evidence" value="ECO:0007669"/>
    <property type="project" value="InterPro"/>
</dbReference>
<dbReference type="GO" id="GO:0005524">
    <property type="term" value="F:ATP binding"/>
    <property type="evidence" value="ECO:0007669"/>
    <property type="project" value="UniProtKB-KW"/>
</dbReference>
<dbReference type="GO" id="GO:0016887">
    <property type="term" value="F:ATP hydrolysis activity"/>
    <property type="evidence" value="ECO:0007669"/>
    <property type="project" value="InterPro"/>
</dbReference>
<dbReference type="CDD" id="cd18577">
    <property type="entry name" value="ABC_6TM_Pgp_ABCB1_D1_like"/>
    <property type="match status" value="1"/>
</dbReference>
<dbReference type="CDD" id="cd18578">
    <property type="entry name" value="ABC_6TM_Pgp_ABCB1_D2_like"/>
    <property type="match status" value="1"/>
</dbReference>
<dbReference type="CDD" id="cd03249">
    <property type="entry name" value="ABC_MTABC3_MDL1_MDL2"/>
    <property type="match status" value="2"/>
</dbReference>
<dbReference type="FunFam" id="3.40.50.300:FF:000251">
    <property type="entry name" value="ABC transporter B family member 19"/>
    <property type="match status" value="1"/>
</dbReference>
<dbReference type="FunFam" id="3.40.50.300:FF:000205">
    <property type="entry name" value="ABC transporter B family member 4"/>
    <property type="match status" value="1"/>
</dbReference>
<dbReference type="Gene3D" id="1.20.1560.10">
    <property type="entry name" value="ABC transporter type 1, transmembrane domain"/>
    <property type="match status" value="1"/>
</dbReference>
<dbReference type="Gene3D" id="3.40.50.300">
    <property type="entry name" value="P-loop containing nucleotide triphosphate hydrolases"/>
    <property type="match status" value="2"/>
</dbReference>
<dbReference type="InterPro" id="IPR003593">
    <property type="entry name" value="AAA+_ATPase"/>
</dbReference>
<dbReference type="InterPro" id="IPR011527">
    <property type="entry name" value="ABC1_TM_dom"/>
</dbReference>
<dbReference type="InterPro" id="IPR036640">
    <property type="entry name" value="ABC1_TM_sf"/>
</dbReference>
<dbReference type="InterPro" id="IPR003439">
    <property type="entry name" value="ABC_transporter-like_ATP-bd"/>
</dbReference>
<dbReference type="InterPro" id="IPR017871">
    <property type="entry name" value="ABC_transporter-like_CS"/>
</dbReference>
<dbReference type="InterPro" id="IPR027417">
    <property type="entry name" value="P-loop_NTPase"/>
</dbReference>
<dbReference type="InterPro" id="IPR039421">
    <property type="entry name" value="Type_1_exporter"/>
</dbReference>
<dbReference type="PANTHER" id="PTHR43394:SF11">
    <property type="entry name" value="ATP-BINDING CASSETTE TRANSPORTER"/>
    <property type="match status" value="1"/>
</dbReference>
<dbReference type="PANTHER" id="PTHR43394">
    <property type="entry name" value="ATP-DEPENDENT PERMEASE MDL1, MITOCHONDRIAL"/>
    <property type="match status" value="1"/>
</dbReference>
<dbReference type="Pfam" id="PF00664">
    <property type="entry name" value="ABC_membrane"/>
    <property type="match status" value="2"/>
</dbReference>
<dbReference type="Pfam" id="PF00005">
    <property type="entry name" value="ABC_tran"/>
    <property type="match status" value="2"/>
</dbReference>
<dbReference type="SMART" id="SM00382">
    <property type="entry name" value="AAA"/>
    <property type="match status" value="2"/>
</dbReference>
<dbReference type="SUPFAM" id="SSF90123">
    <property type="entry name" value="ABC transporter transmembrane region"/>
    <property type="match status" value="2"/>
</dbReference>
<dbReference type="SUPFAM" id="SSF52540">
    <property type="entry name" value="P-loop containing nucleoside triphosphate hydrolases"/>
    <property type="match status" value="2"/>
</dbReference>
<dbReference type="PROSITE" id="PS50929">
    <property type="entry name" value="ABC_TM1F"/>
    <property type="match status" value="2"/>
</dbReference>
<dbReference type="PROSITE" id="PS00211">
    <property type="entry name" value="ABC_TRANSPORTER_1"/>
    <property type="match status" value="2"/>
</dbReference>
<dbReference type="PROSITE" id="PS50893">
    <property type="entry name" value="ABC_TRANSPORTER_2"/>
    <property type="match status" value="2"/>
</dbReference>
<protein>
    <recommendedName>
        <fullName>ABC transporter B family member 14</fullName>
        <shortName>ABC transporter ABCB.14</shortName>
        <shortName>AtABCB14</shortName>
    </recommendedName>
    <alternativeName>
        <fullName>Multidrug resistance protein 12</fullName>
    </alternativeName>
    <alternativeName>
        <fullName>P-glycoprotein 14</fullName>
    </alternativeName>
</protein>
<proteinExistence type="inferred from homology"/>
<reference key="1">
    <citation type="journal article" date="2000" name="Nature">
        <title>Sequence and analysis of chromosome 1 of the plant Arabidopsis thaliana.</title>
        <authorList>
            <person name="Theologis A."/>
            <person name="Ecker J.R."/>
            <person name="Palm C.J."/>
            <person name="Federspiel N.A."/>
            <person name="Kaul S."/>
            <person name="White O."/>
            <person name="Alonso J."/>
            <person name="Altafi H."/>
            <person name="Araujo R."/>
            <person name="Bowman C.L."/>
            <person name="Brooks S.Y."/>
            <person name="Buehler E."/>
            <person name="Chan A."/>
            <person name="Chao Q."/>
            <person name="Chen H."/>
            <person name="Cheuk R.F."/>
            <person name="Chin C.W."/>
            <person name="Chung M.K."/>
            <person name="Conn L."/>
            <person name="Conway A.B."/>
            <person name="Conway A.R."/>
            <person name="Creasy T.H."/>
            <person name="Dewar K."/>
            <person name="Dunn P."/>
            <person name="Etgu P."/>
            <person name="Feldblyum T.V."/>
            <person name="Feng J.-D."/>
            <person name="Fong B."/>
            <person name="Fujii C.Y."/>
            <person name="Gill J.E."/>
            <person name="Goldsmith A.D."/>
            <person name="Haas B."/>
            <person name="Hansen N.F."/>
            <person name="Hughes B."/>
            <person name="Huizar L."/>
            <person name="Hunter J.L."/>
            <person name="Jenkins J."/>
            <person name="Johnson-Hopson C."/>
            <person name="Khan S."/>
            <person name="Khaykin E."/>
            <person name="Kim C.J."/>
            <person name="Koo H.L."/>
            <person name="Kremenetskaia I."/>
            <person name="Kurtz D.B."/>
            <person name="Kwan A."/>
            <person name="Lam B."/>
            <person name="Langin-Hooper S."/>
            <person name="Lee A."/>
            <person name="Lee J.M."/>
            <person name="Lenz C.A."/>
            <person name="Li J.H."/>
            <person name="Li Y.-P."/>
            <person name="Lin X."/>
            <person name="Liu S.X."/>
            <person name="Liu Z.A."/>
            <person name="Luros J.S."/>
            <person name="Maiti R."/>
            <person name="Marziali A."/>
            <person name="Militscher J."/>
            <person name="Miranda M."/>
            <person name="Nguyen M."/>
            <person name="Nierman W.C."/>
            <person name="Osborne B.I."/>
            <person name="Pai G."/>
            <person name="Peterson J."/>
            <person name="Pham P.K."/>
            <person name="Rizzo M."/>
            <person name="Rooney T."/>
            <person name="Rowley D."/>
            <person name="Sakano H."/>
            <person name="Salzberg S.L."/>
            <person name="Schwartz J.R."/>
            <person name="Shinn P."/>
            <person name="Southwick A.M."/>
            <person name="Sun H."/>
            <person name="Tallon L.J."/>
            <person name="Tambunga G."/>
            <person name="Toriumi M.J."/>
            <person name="Town C.D."/>
            <person name="Utterback T."/>
            <person name="Van Aken S."/>
            <person name="Vaysberg M."/>
            <person name="Vysotskaia V.S."/>
            <person name="Walker M."/>
            <person name="Wu D."/>
            <person name="Yu G."/>
            <person name="Fraser C.M."/>
            <person name="Venter J.C."/>
            <person name="Davis R.W."/>
        </authorList>
    </citation>
    <scope>NUCLEOTIDE SEQUENCE [LARGE SCALE GENOMIC DNA]</scope>
    <source>
        <strain>cv. Columbia</strain>
    </source>
</reference>
<reference key="2">
    <citation type="journal article" date="2017" name="Plant J.">
        <title>Araport11: a complete reannotation of the Arabidopsis thaliana reference genome.</title>
        <authorList>
            <person name="Cheng C.Y."/>
            <person name="Krishnakumar V."/>
            <person name="Chan A.P."/>
            <person name="Thibaud-Nissen F."/>
            <person name="Schobel S."/>
            <person name="Town C.D."/>
        </authorList>
    </citation>
    <scope>GENOME REANNOTATION</scope>
    <source>
        <strain>cv. Columbia</strain>
    </source>
</reference>
<reference key="3">
    <citation type="journal article" date="2001" name="J. Biol. Chem.">
        <title>The Arabidopsis thaliana ABC protein superfamily, a complete inventory.</title>
        <authorList>
            <person name="Sanchez-Fernandez R."/>
            <person name="Davies T.G."/>
            <person name="Coleman J.O."/>
            <person name="Rea P.A."/>
        </authorList>
    </citation>
    <scope>GENE FAMILY</scope>
    <scope>NOMENCLATURE</scope>
</reference>
<reference key="4">
    <citation type="journal article" date="2008" name="Trends Plant Sci.">
        <title>Plant ABC proteins - a unified nomenclature and updated inventory.</title>
        <authorList>
            <person name="Verrier P.J."/>
            <person name="Bird D."/>
            <person name="Burla B."/>
            <person name="Dassa E."/>
            <person name="Forestier C."/>
            <person name="Geisler M."/>
            <person name="Klein M."/>
            <person name="Kolukisaoglu H.U."/>
            <person name="Lee Y."/>
            <person name="Martinoia E."/>
            <person name="Murphy A."/>
            <person name="Rea P.A."/>
            <person name="Samuels L."/>
            <person name="Schulz B."/>
            <person name="Spalding E.J."/>
            <person name="Yazaki K."/>
            <person name="Theodoulou F.L."/>
        </authorList>
    </citation>
    <scope>GENE FAMILY</scope>
    <scope>NOMENCLATURE</scope>
</reference>
<accession>Q9C7F2</accession>
<gene>
    <name type="primary">ABCB14</name>
    <name type="synonym">MDR12</name>
    <name type="synonym">PGP14</name>
    <name type="ordered locus">At1g28010</name>
    <name type="ORF">F13K9.11</name>
</gene>
<evidence type="ECO:0000255" key="1"/>
<evidence type="ECO:0000255" key="2">
    <source>
        <dbReference type="PROSITE-ProRule" id="PRU00434"/>
    </source>
</evidence>
<evidence type="ECO:0000255" key="3">
    <source>
        <dbReference type="PROSITE-ProRule" id="PRU00441"/>
    </source>
</evidence>
<evidence type="ECO:0000305" key="4"/>
<sequence>MDNIEPPFSGNIHAETEVKKEEKKKMKKESVSLMGLFSAADNVDYFLMFLGGLGTCIHGGTLPLFFVFFGGMLDSLGKLSTDPNAISSRVSQNALYLVYLGLVNLVSAWIGVACWMQTGERQTARLRINYLKSILAKDITFFDTEARDSNFIFHISSDAILVQDAIGDKTGHVLRYLCQFIAGFVIGFLSVWQLTLLTLGVVPLIAIAGGGYAIVMSTISEKSEAAYADAGKVAEEVMSQVRTVYAFVGEEKAVKSYSNSLKKALKLSKRSGLAKGLGVGLTYSLLFCAWALLFWYASLLVRHGKTNGAKAFTTILNVIYSGFALGQAVPSLSAISKGRVAAANIFKMIGNNNLESSERLENGTTLQNVVGKIEFCGVSFAYPSRPNMVFENLSFTIHSGKTFAFVGPSGSGKSTIISMVQRFYEPRSGEILLDGNDIKNLKLKWLREQMGLVSQEPALFATTIASNILLGKEKANMDQIIEAAKAANADSFIKSLPNGYNTQVGEGGTQLSGGQKQRIAIARAVLRNPKILLLDEATSALDAESEKIVQQALDNVMEKRTTIVIAHRLSTIRNVDKIVVLRDGQVRETGSHSELISRGGDYATLVNCQDTEPQENLRSVMYESCRSQAGSYSSRRVFSSRRTSSFREDQEKTEKDSKGEDLISSSSMIWELIKLNAPEWLYALLGSIGAVLAGSQPALFSMGLAYVLTTFYSPFPSLIKREVDKVAIIFVGAGIVTAPIYILQHYFYTLMGERLTSRVRLSLFSAILSNEIGWFDLDENNTGSLTSILAADATLVRSAIADRLSTIVQNLSLTITALALAFFYSWRVAAVVTACFPLLIAASLTEQLFLKGFGGDYTRAYSRATSLAREAISNIRTVAAFSAEKQISEQFTCELSKPTKSALLRGHISGFGYGLSQCLAFCSYALGLWYISVLIKRNETNFEDSIKSFMVLLVTAYSVAETLALTPDIVKGTQALGSVFRVLHRETEIPPDQPNSRLVTHIKGDIEFRNVSFAYPTRPEIAIFKNLNLRVSAGKSLAVVGPSGSGKSTVIGLIMRFYDPSNGNLCIDGHDIKSVNLRSLRKKLALVQQEPALFSTSIHENIKYGNENASEAEIIEAAKAANAHEFISRMEEGYMTHVGDKGVQLSGGQKQRVAIARAVLKDPSVLLLDEATSALDTSAEKQVQEALDKLMKGRTTILVAHRLSTIRKADTIVVLHKGKVVEKGSHRELVSKSDGFYKKLTSLQEAV</sequence>
<name>AB14B_ARATH</name>
<feature type="chain" id="PRO_0000227923" description="ABC transporter B family member 14">
    <location>
        <begin position="1"/>
        <end position="1247"/>
    </location>
</feature>
<feature type="transmembrane region" description="Helical" evidence="3">
    <location>
        <begin position="49"/>
        <end position="69"/>
    </location>
</feature>
<feature type="transmembrane region" description="Helical" evidence="3">
    <location>
        <begin position="95"/>
        <end position="115"/>
    </location>
</feature>
<feature type="transmembrane region" description="Helical" evidence="3">
    <location>
        <begin position="172"/>
        <end position="192"/>
    </location>
</feature>
<feature type="transmembrane region" description="Helical" evidence="3">
    <location>
        <begin position="196"/>
        <end position="216"/>
    </location>
</feature>
<feature type="transmembrane region" description="Helical" evidence="3">
    <location>
        <begin position="277"/>
        <end position="297"/>
    </location>
</feature>
<feature type="transmembrane region" description="Helical" evidence="3">
    <location>
        <begin position="315"/>
        <end position="335"/>
    </location>
</feature>
<feature type="transmembrane region" description="Helical" evidence="3">
    <location>
        <begin position="680"/>
        <end position="700"/>
    </location>
</feature>
<feature type="transmembrane region" description="Helical" evidence="3">
    <location>
        <begin position="727"/>
        <end position="747"/>
    </location>
</feature>
<feature type="transmembrane region" description="Helical" evidence="3">
    <location>
        <begin position="807"/>
        <end position="824"/>
    </location>
</feature>
<feature type="transmembrane region" description="Helical" evidence="3">
    <location>
        <begin position="830"/>
        <end position="850"/>
    </location>
</feature>
<feature type="transmembrane region" description="Helical" evidence="3">
    <location>
        <begin position="915"/>
        <end position="935"/>
    </location>
</feature>
<feature type="transmembrane region" description="Helical" evidence="3">
    <location>
        <begin position="949"/>
        <end position="969"/>
    </location>
</feature>
<feature type="domain" description="ABC transmembrane type-1 1" evidence="3">
    <location>
        <begin position="48"/>
        <end position="337"/>
    </location>
</feature>
<feature type="domain" description="ABC transporter 1" evidence="2">
    <location>
        <begin position="373"/>
        <end position="608"/>
    </location>
</feature>
<feature type="domain" description="ABC transmembrane type-1 2" evidence="3">
    <location>
        <begin position="679"/>
        <end position="971"/>
    </location>
</feature>
<feature type="domain" description="ABC transporter 2" evidence="2">
    <location>
        <begin position="1006"/>
        <end position="1242"/>
    </location>
</feature>
<feature type="binding site" evidence="2">
    <location>
        <begin position="407"/>
        <end position="414"/>
    </location>
    <ligand>
        <name>ATP</name>
        <dbReference type="ChEBI" id="CHEBI:30616"/>
        <label>1</label>
    </ligand>
</feature>
<feature type="binding site" evidence="2">
    <location>
        <begin position="1041"/>
        <end position="1048"/>
    </location>
    <ligand>
        <name>ATP</name>
        <dbReference type="ChEBI" id="CHEBI:30616"/>
        <label>2</label>
    </ligand>
</feature>
<feature type="glycosylation site" description="N-linked (GlcNAc...) asparagine" evidence="1">
    <location>
        <position position="362"/>
    </location>
</feature>
<feature type="glycosylation site" description="N-linked (GlcNAc...) asparagine" evidence="1">
    <location>
        <position position="392"/>
    </location>
</feature>
<feature type="glycosylation site" description="N-linked (GlcNAc...) asparagine" evidence="1">
    <location>
        <position position="780"/>
    </location>
</feature>
<feature type="glycosylation site" description="N-linked (GlcNAc...) asparagine" evidence="1">
    <location>
        <position position="938"/>
    </location>
</feature>
<feature type="glycosylation site" description="N-linked (GlcNAc...) asparagine" evidence="1">
    <location>
        <position position="1010"/>
    </location>
</feature>
<feature type="glycosylation site" description="N-linked (GlcNAc...) asparagine" evidence="1">
    <location>
        <position position="1108"/>
    </location>
</feature>